<name>071L_IIV6</name>
<accession>O55710</accession>
<gene>
    <name type="ORF">IIV6-071L</name>
</gene>
<keyword id="KW-1185">Reference proteome</keyword>
<organism>
    <name type="scientific">Invertebrate iridescent virus 6</name>
    <name type="common">IIV-6</name>
    <name type="synonym">Chilo iridescent virus</name>
    <dbReference type="NCBI Taxonomy" id="176652"/>
    <lineage>
        <taxon>Viruses</taxon>
        <taxon>Varidnaviria</taxon>
        <taxon>Bamfordvirae</taxon>
        <taxon>Nucleocytoviricota</taxon>
        <taxon>Megaviricetes</taxon>
        <taxon>Pimascovirales</taxon>
        <taxon>Iridoviridae</taxon>
        <taxon>Betairidovirinae</taxon>
        <taxon>Iridovirus</taxon>
    </lineage>
</organism>
<sequence>MSIIEIITDSSINTTTDIGIVNLTQIEPLLCGFITIDTGNVYDLISSACMFMKQFSPYNLRLFESSYIEENTMTFIRVNSENPAYFVCRVNSLGNDNNEEKIQKIKNNLEINFLYNNIIHDESNILIIG</sequence>
<protein>
    <recommendedName>
        <fullName>Uncharacterized protein 071L</fullName>
    </recommendedName>
</protein>
<reference key="1">
    <citation type="journal article" date="2001" name="Virology">
        <title>Analysis of the first complete DNA sequence of an invertebrate iridovirus: coding strategy of the genome of Chilo iridescent virus.</title>
        <authorList>
            <person name="Jakob N.J."/>
            <person name="Mueller K."/>
            <person name="Bahr U."/>
            <person name="Darai G."/>
        </authorList>
    </citation>
    <scope>NUCLEOTIDE SEQUENCE [LARGE SCALE GENOMIC DNA]</scope>
</reference>
<reference key="2">
    <citation type="journal article" date="2007" name="Virol. J.">
        <title>Comparative genomic analysis of the family Iridoviridae: re-annotating and defining the core set of iridovirus genes.</title>
        <authorList>
            <person name="Eaton H.E."/>
            <person name="Metcalf J."/>
            <person name="Penny E."/>
            <person name="Tcherepanov V."/>
            <person name="Upton C."/>
            <person name="Brunetti C.R."/>
        </authorList>
    </citation>
    <scope>GENOME REANNOTATION</scope>
</reference>
<organismHost>
    <name type="scientific">Acheta domesticus</name>
    <name type="common">House cricket</name>
    <dbReference type="NCBI Taxonomy" id="6997"/>
</organismHost>
<organismHost>
    <name type="scientific">Chilo suppressalis</name>
    <name type="common">Asiatic rice borer moth</name>
    <dbReference type="NCBI Taxonomy" id="168631"/>
</organismHost>
<organismHost>
    <name type="scientific">Gryllus bimaculatus</name>
    <name type="common">Two-spotted cricket</name>
    <dbReference type="NCBI Taxonomy" id="6999"/>
</organismHost>
<organismHost>
    <name type="scientific">Gryllus campestris</name>
    <dbReference type="NCBI Taxonomy" id="58607"/>
</organismHost>
<organismHost>
    <name type="scientific">Spodoptera frugiperda</name>
    <name type="common">Fall armyworm</name>
    <dbReference type="NCBI Taxonomy" id="7108"/>
</organismHost>
<dbReference type="EMBL" id="AF303741">
    <property type="protein sequence ID" value="AAB94421.1"/>
    <property type="molecule type" value="Genomic_DNA"/>
</dbReference>
<dbReference type="PIR" id="T03047">
    <property type="entry name" value="T03047"/>
</dbReference>
<dbReference type="RefSeq" id="NP_149534.1">
    <property type="nucleotide sequence ID" value="NC_003038.1"/>
</dbReference>
<dbReference type="KEGG" id="vg:1733301"/>
<dbReference type="OrthoDB" id="41130at10239"/>
<dbReference type="Proteomes" id="UP000001359">
    <property type="component" value="Genome"/>
</dbReference>
<proteinExistence type="predicted"/>
<feature type="chain" id="PRO_0000377978" description="Uncharacterized protein 071L">
    <location>
        <begin position="1"/>
        <end position="129"/>
    </location>
</feature>